<feature type="transit peptide" description="Mitochondrion" evidence="2">
    <location>
        <begin position="1"/>
        <end status="unknown"/>
    </location>
</feature>
<feature type="chain" id="PRO_0000045777" description="Serine acetyltransferase 3, mitochondrial">
    <location>
        <begin status="unknown"/>
        <end position="391"/>
    </location>
</feature>
<feature type="region of interest" description="Disordered" evidence="3">
    <location>
        <begin position="40"/>
        <end position="82"/>
    </location>
</feature>
<feature type="region of interest" description="Disordered" evidence="3">
    <location>
        <begin position="353"/>
        <end position="375"/>
    </location>
</feature>
<feature type="compositionally biased region" description="Pro residues" evidence="3">
    <location>
        <begin position="45"/>
        <end position="56"/>
    </location>
</feature>
<feature type="sequence conflict" description="In Ref. 5; AAB02050." evidence="11" ref="5">
    <original>V</original>
    <variation>G</variation>
    <location>
        <position position="186"/>
    </location>
</feature>
<gene>
    <name type="primary">SAT3</name>
    <name type="synonym">SAT1</name>
    <name type="synonym">SATA</name>
    <name type="ordered locus">At3g13110</name>
    <name type="ORF">MJG19.6</name>
</gene>
<reference key="1">
    <citation type="journal article" date="1996" name="Plant Mol. Biol.">
        <title>Cloning and characterization of an Arabidopsis thaliana cDNA clone encoding an organellar isoform of serine acetyltransferase.</title>
        <authorList>
            <person name="Roberts M.A."/>
            <person name="Wray J.L."/>
        </authorList>
    </citation>
    <scope>NUCLEOTIDE SEQUENCE [MRNA]</scope>
    <source>
        <strain>cv. Columbia</strain>
    </source>
</reference>
<reference key="2">
    <citation type="journal article" date="2000" name="DNA Res.">
        <title>Structural analysis of Arabidopsis thaliana chromosome 3. II. Sequence features of the 4,251,695 bp regions covered by 90 P1, TAC and BAC clones.</title>
        <authorList>
            <person name="Kaneko T."/>
            <person name="Katoh T."/>
            <person name="Sato S."/>
            <person name="Nakamura Y."/>
            <person name="Asamizu E."/>
            <person name="Tabata S."/>
        </authorList>
    </citation>
    <scope>NUCLEOTIDE SEQUENCE [LARGE SCALE GENOMIC DNA]</scope>
    <source>
        <strain>cv. Columbia</strain>
    </source>
</reference>
<reference key="3">
    <citation type="journal article" date="2017" name="Plant J.">
        <title>Araport11: a complete reannotation of the Arabidopsis thaliana reference genome.</title>
        <authorList>
            <person name="Cheng C.Y."/>
            <person name="Krishnakumar V."/>
            <person name="Chan A.P."/>
            <person name="Thibaud-Nissen F."/>
            <person name="Schobel S."/>
            <person name="Town C.D."/>
        </authorList>
    </citation>
    <scope>GENOME REANNOTATION</scope>
    <source>
        <strain>cv. Columbia</strain>
    </source>
</reference>
<reference key="4">
    <citation type="submission" date="2006-08" db="EMBL/GenBank/DDBJ databases">
        <title>Arabidopsis ORF clones.</title>
        <authorList>
            <person name="Quinitio C."/>
            <person name="Chen H."/>
            <person name="Kim C.J."/>
            <person name="Shinn P."/>
            <person name="Ecker J.R."/>
        </authorList>
    </citation>
    <scope>NUCLEOTIDE SEQUENCE [LARGE SCALE MRNA]</scope>
    <source>
        <strain>cv. Columbia</strain>
    </source>
</reference>
<reference key="5">
    <citation type="submission" date="1996-06" db="EMBL/GenBank/DDBJ databases">
        <title>Gene sequence of serine acetyltransferase 1 from A. thaliana.</title>
        <authorList>
            <person name="Ruffet M.-L."/>
            <person name="Lebrun M."/>
            <person name="Droux M."/>
            <person name="Douce R."/>
        </authorList>
    </citation>
    <scope>NUCLEOTIDE SEQUENCE [GENOMIC DNA] OF 6-391</scope>
</reference>
<reference key="6">
    <citation type="submission" date="2006-07" db="EMBL/GenBank/DDBJ databases">
        <title>Large-scale analysis of RIKEN Arabidopsis full-length (RAFL) cDNAs.</title>
        <authorList>
            <person name="Totoki Y."/>
            <person name="Seki M."/>
            <person name="Ishida J."/>
            <person name="Nakajima M."/>
            <person name="Enju A."/>
            <person name="Kamiya A."/>
            <person name="Narusaka M."/>
            <person name="Shin-i T."/>
            <person name="Nakagawa M."/>
            <person name="Sakamoto N."/>
            <person name="Oishi K."/>
            <person name="Kohara Y."/>
            <person name="Kobayashi M."/>
            <person name="Toyoda A."/>
            <person name="Sakaki Y."/>
            <person name="Sakurai T."/>
            <person name="Iida K."/>
            <person name="Akiyama K."/>
            <person name="Satou M."/>
            <person name="Toyoda T."/>
            <person name="Konagaya A."/>
            <person name="Carninci P."/>
            <person name="Kawai J."/>
            <person name="Hayashizaki Y."/>
            <person name="Shinozaki K."/>
        </authorList>
    </citation>
    <scope>NUCLEOTIDE SEQUENCE [LARGE SCALE MRNA] OF 25-391</scope>
    <source>
        <strain>cv. Columbia</strain>
    </source>
</reference>
<reference key="7">
    <citation type="journal article" date="1995" name="FEBS Lett.">
        <title>Cysteine biosynthesis in plants: isolation and functional identification of a cDNA encoding a serine acetyltransferase from Arabidopsis thaliana.</title>
        <authorList>
            <person name="Bogdanova N."/>
            <person name="Bork C."/>
            <person name="Hell R."/>
        </authorList>
    </citation>
    <scope>NUCLEOTIDE SEQUENCE [MRNA] OF 37-391 AND 80-391</scope>
    <scope>TISSUE SPECIFICITY</scope>
    <scope>INDUCTION</scope>
    <source>
        <strain>cv. Columbia</strain>
        <tissue>Leaf</tissue>
    </source>
</reference>
<reference key="8">
    <citation type="journal article" date="1998" name="J. Biol. Chem.">
        <title>Isoform-dependent differences in feedback regulation and subcellular localization of serine acetyltransferase involved in cysteine biosynthesis from Arabidopsis thaliana.</title>
        <authorList>
            <person name="Noji M."/>
            <person name="Inoue K."/>
            <person name="Kimura N."/>
            <person name="Gouda A."/>
            <person name="Saito K."/>
        </authorList>
    </citation>
    <scope>SUBCELLULAR LOCATION</scope>
    <scope>BIOPHYSICOCHEMICAL PROPERTIES</scope>
</reference>
<reference key="9">
    <citation type="journal article" date="2000" name="Gene">
        <title>Genomic and functional characterization of the oas gene family encoding O-acetylserine (thiol) lyases, enzymes catalyzing the final step in cysteine biosynthesis in Arabidopsis thaliana.</title>
        <authorList>
            <person name="Jost R."/>
            <person name="Berkowitz O."/>
            <person name="Wirtz M."/>
            <person name="Hopkins L."/>
            <person name="Hawkesford M.J."/>
            <person name="Hell R."/>
        </authorList>
    </citation>
    <scope>INTERACTION WITH OASC</scope>
</reference>
<reference key="10">
    <citation type="journal article" date="2003" name="Plant Mol. Biol.">
        <title>The serine acetyltransferase gene family in Arabidopsis thaliana and the regulation of its expression by cadmium.</title>
        <authorList>
            <person name="Howarth J.R."/>
            <person name="Dominguez-Solis J.R."/>
            <person name="Gutierrez-Alcala G."/>
            <person name="Wray J.L."/>
            <person name="Romero L.C."/>
            <person name="Gotor C."/>
        </authorList>
    </citation>
    <scope>TISSUE SPECIFICITY</scope>
    <scope>INDUCTION</scope>
    <source>
        <strain>cv. Columbia</strain>
    </source>
</reference>
<reference key="11">
    <citation type="journal article" date="2005" name="Plant Physiol.">
        <title>Characterization and expression analysis of a serine acetyltransferase gene family involved in a key step of the sulfur assimilation pathway in Arabidopsis.</title>
        <authorList>
            <person name="Kawashima C.G."/>
            <person name="Berkowitz O."/>
            <person name="Hell R."/>
            <person name="Noji M."/>
            <person name="Saito K."/>
        </authorList>
    </citation>
    <scope>TISSUE SPECIFICITY</scope>
    <scope>INDUCTION</scope>
    <scope>GENE FAMILY</scope>
    <scope>NOMENCLATURE</scope>
</reference>
<reference key="12">
    <citation type="journal article" date="2010" name="J. Biol. Chem.">
        <title>Structure and function of the hetero-oligomeric cysteine synthase complex in plants.</title>
        <authorList>
            <person name="Wirtz M."/>
            <person name="Birke H."/>
            <person name="Heeg C."/>
            <person name="Mueller C."/>
            <person name="Hosp F."/>
            <person name="Throm C."/>
            <person name="Koenig S."/>
            <person name="Feldman-Salit A."/>
            <person name="Rippe K."/>
            <person name="Petersen G."/>
            <person name="Wade R.C."/>
            <person name="Rybin V."/>
            <person name="Scheffzek K."/>
            <person name="Hell R."/>
        </authorList>
    </citation>
    <scope>COMPONENT OF THE CYSTEINE SYNTHASE COMPLEX</scope>
</reference>
<reference key="13">
    <citation type="journal article" date="2012" name="J. Biol. Chem.">
        <title>Mitochondrial cysteine synthase complex regulates O-acetylserine biosynthesis in plants.</title>
        <authorList>
            <person name="Wirtz M."/>
            <person name="Beard K.F."/>
            <person name="Lee C.P."/>
            <person name="Boltz A."/>
            <person name="Schwarzlaender M."/>
            <person name="Fuchs C."/>
            <person name="Meyer A.J."/>
            <person name="Heeg C."/>
            <person name="Sweetlove L.J."/>
            <person name="Ratcliffe R.G."/>
            <person name="Hell R."/>
        </authorList>
    </citation>
    <scope>INTERACTION WITH OASC</scope>
    <scope>COMPONENT OF THE CYSTEINE SYNTHASE COMPLEX</scope>
</reference>
<reference key="14">
    <citation type="journal article" date="2013" name="Plant Sci.">
        <title>Direct targeting of Arabidopsis cysteine synthase complexes with synthetic polypeptides to selectively deregulate cysteine synthesis.</title>
        <authorList>
            <person name="Wawrzynska A."/>
            <person name="Kurzyk A."/>
            <person name="Mierzwinska M."/>
            <person name="Plochocka D."/>
            <person name="Wieczorek G."/>
            <person name="Sirko A."/>
        </authorList>
    </citation>
    <scope>INTERACTION WITH OASC</scope>
</reference>
<evidence type="ECO:0000250" key="1"/>
<evidence type="ECO:0000255" key="2"/>
<evidence type="ECO:0000256" key="3">
    <source>
        <dbReference type="SAM" id="MobiDB-lite"/>
    </source>
</evidence>
<evidence type="ECO:0000269" key="4">
    <source>
    </source>
</evidence>
<evidence type="ECO:0000269" key="5">
    <source>
    </source>
</evidence>
<evidence type="ECO:0000269" key="6">
    <source>
    </source>
</evidence>
<evidence type="ECO:0000269" key="7">
    <source>
    </source>
</evidence>
<evidence type="ECO:0000269" key="8">
    <source>
    </source>
</evidence>
<evidence type="ECO:0000269" key="9">
    <source>
    </source>
</evidence>
<evidence type="ECO:0000269" key="10">
    <source>
    </source>
</evidence>
<evidence type="ECO:0000305" key="11"/>
<comment type="catalytic activity">
    <reaction>
        <text>L-serine + acetyl-CoA = O-acetyl-L-serine + CoA</text>
        <dbReference type="Rhea" id="RHEA:24560"/>
        <dbReference type="ChEBI" id="CHEBI:33384"/>
        <dbReference type="ChEBI" id="CHEBI:57287"/>
        <dbReference type="ChEBI" id="CHEBI:57288"/>
        <dbReference type="ChEBI" id="CHEBI:58340"/>
        <dbReference type="EC" id="2.3.1.30"/>
    </reaction>
</comment>
<comment type="biophysicochemical properties">
    <kinetics>
        <KM evidence="10">1.68 mM for L-Ser (at pH 8 and 37 degrees Celsius)</KM>
        <KM evidence="10">0.02 mM for acetyl-CoA (at pH 8 and 37 degrees Celsius)</KM>
    </kinetics>
</comment>
<comment type="pathway">
    <text>Amino-acid biosynthesis; L-cysteine biosynthesis; L-cysteine from L-serine: step 1/2.</text>
</comment>
<comment type="subunit">
    <text evidence="1 4 7 8">Homomultimer (By similarity). Interacts with OASC. Component of the cysteine synthase complex (CSC) composed of two OAS-TL dimers and one SAT hexamer.</text>
</comment>
<comment type="interaction">
    <interactant intactId="EBI-1633440">
        <id>Q39218</id>
    </interactant>
    <interactant intactId="EBI-1633616">
        <id>Q43725</id>
        <label>OASC</label>
    </interactant>
    <organismsDiffer>false</organismsDiffer>
    <experiments>6</experiments>
</comment>
<comment type="subcellular location">
    <subcellularLocation>
        <location evidence="10">Mitochondrion</location>
    </subcellularLocation>
</comment>
<comment type="tissue specificity">
    <text evidence="5 6 9">Ubiquitous with higher levels in leaves and siliques. Localized in vascular tissues, particularly in phloem.</text>
</comment>
<comment type="induction">
    <text evidence="5 6 9">By light, cadmium (Cd), and slightly by sulfur deficiency.</text>
</comment>
<comment type="similarity">
    <text evidence="11">Belongs to the transferase hexapeptide repeat family.</text>
</comment>
<comment type="sequence caution" evidence="11">
    <conflict type="erroneous initiation">
        <sequence resource="EMBL-CDS" id="AAB02050"/>
    </conflict>
</comment>
<comment type="sequence caution" evidence="11">
    <conflict type="erroneous initiation">
        <sequence resource="EMBL-CDS" id="CAA56913"/>
    </conflict>
</comment>
<accession>Q39218</accession>
<accession>Q0V7U9</accession>
<accession>Q0WWV4</accession>
<accession>Q42532</accession>
<accession>Q43739</accession>
<accession>Q43740</accession>
<accession>Q7DLZ8</accession>
<accession>Q7DM01</accession>
<sequence length="391" mass="42721">MLPVTSRRHFTMSLYMLRSSSPHINHHSFLLPSFVSSKFKHHTLSPPPSPPPPPPMAACIDTCRTGKPQISPRDSSKHHDDESGFRYMNYFRYPDRSSFNGTQTKTLHTRPLLEDLDRDAEVDDVWAKIREEAKSDIAKEPIVSAYYHASIVSQRSLEAALANTLSVKLSNLNLPSNTLFDLFSGVLQGNPDIVESVKLDLLAVKERDPACISYVHCFLHFKGFLACQAHRIAHELWTQDRKILALLIQNRVSEAFAVDFHPGAKIGTGILLDHATAIVIGETAVVGNNVSILHNVTLGGTGKQCGDRHPKIGDGVLIGAGTCILGNITIGEGAKIGAGSVVLKDVPPRTTAVGNPARLLGGKDNPKTHDKIPGLTMDQTSHISEWSDYVI</sequence>
<dbReference type="EC" id="2.3.1.30"/>
<dbReference type="EMBL" id="U22964">
    <property type="protein sequence ID" value="AAB07778.1"/>
    <property type="molecule type" value="mRNA"/>
</dbReference>
<dbReference type="EMBL" id="AP000375">
    <property type="protein sequence ID" value="BAB01402.1"/>
    <property type="molecule type" value="Genomic_DNA"/>
</dbReference>
<dbReference type="EMBL" id="CP002686">
    <property type="protein sequence ID" value="AEE75297.1"/>
    <property type="molecule type" value="Genomic_DNA"/>
</dbReference>
<dbReference type="EMBL" id="BT026471">
    <property type="protein sequence ID" value="ABH04578.1"/>
    <property type="molecule type" value="mRNA"/>
</dbReference>
<dbReference type="EMBL" id="L78443">
    <property type="protein sequence ID" value="AAB02050.1"/>
    <property type="status" value="ALT_INIT"/>
    <property type="molecule type" value="Genomic_DNA"/>
</dbReference>
<dbReference type="EMBL" id="AK226230">
    <property type="protein sequence ID" value="BAE98394.1"/>
    <property type="molecule type" value="mRNA"/>
</dbReference>
<dbReference type="EMBL" id="X80938">
    <property type="protein sequence ID" value="CAA56913.1"/>
    <property type="status" value="ALT_INIT"/>
    <property type="molecule type" value="mRNA"/>
</dbReference>
<dbReference type="EMBL" id="X82888">
    <property type="protein sequence ID" value="CAA58061.1"/>
    <property type="molecule type" value="mRNA"/>
</dbReference>
<dbReference type="PIR" id="S68469">
    <property type="entry name" value="S68469"/>
</dbReference>
<dbReference type="PIR" id="S69192">
    <property type="entry name" value="S69192"/>
</dbReference>
<dbReference type="SMR" id="Q39218"/>
<dbReference type="BioGRID" id="5833">
    <property type="interactions" value="3"/>
</dbReference>
<dbReference type="DIP" id="DIP-40499N"/>
<dbReference type="FunCoup" id="Q39218">
    <property type="interactions" value="485"/>
</dbReference>
<dbReference type="IntAct" id="Q39218">
    <property type="interactions" value="1"/>
</dbReference>
<dbReference type="STRING" id="3702.Q39218"/>
<dbReference type="iPTMnet" id="Q39218"/>
<dbReference type="PaxDb" id="3702-AT3G13110.1"/>
<dbReference type="ProteomicsDB" id="232880"/>
<dbReference type="EnsemblPlants" id="AT3G13110.1">
    <property type="protein sequence ID" value="AT3G13110.1"/>
    <property type="gene ID" value="AT3G13110"/>
</dbReference>
<dbReference type="GeneID" id="820499"/>
<dbReference type="Gramene" id="AT3G13110.1">
    <property type="protein sequence ID" value="AT3G13110.1"/>
    <property type="gene ID" value="AT3G13110"/>
</dbReference>
<dbReference type="KEGG" id="ath:AT3G13110"/>
<dbReference type="Araport" id="AT3G13110"/>
<dbReference type="TAIR" id="AT3G13110">
    <property type="gene designation" value="SERAT2"/>
</dbReference>
<dbReference type="eggNOG" id="KOG4750">
    <property type="taxonomic scope" value="Eukaryota"/>
</dbReference>
<dbReference type="HOGENOM" id="CLU_051638_0_2_1"/>
<dbReference type="InParanoid" id="Q39218"/>
<dbReference type="OMA" id="WHPTHAG"/>
<dbReference type="OrthoDB" id="25818at2759"/>
<dbReference type="PhylomeDB" id="Q39218"/>
<dbReference type="BioCyc" id="ARA:AT3G13110-MONOMER"/>
<dbReference type="BioCyc" id="MetaCyc:AT3G13110-MONOMER"/>
<dbReference type="BRENDA" id="2.3.1.30">
    <property type="organism ID" value="399"/>
</dbReference>
<dbReference type="SABIO-RK" id="Q39218"/>
<dbReference type="UniPathway" id="UPA00136">
    <property type="reaction ID" value="UER00199"/>
</dbReference>
<dbReference type="PRO" id="PR:Q39218"/>
<dbReference type="Proteomes" id="UP000006548">
    <property type="component" value="Chromosome 3"/>
</dbReference>
<dbReference type="ExpressionAtlas" id="Q39218">
    <property type="expression patterns" value="baseline and differential"/>
</dbReference>
<dbReference type="GO" id="GO:0005739">
    <property type="term" value="C:mitochondrion"/>
    <property type="evidence" value="ECO:0000314"/>
    <property type="project" value="TAIR"/>
</dbReference>
<dbReference type="GO" id="GO:0009001">
    <property type="term" value="F:serine O-acetyltransferase activity"/>
    <property type="evidence" value="ECO:0000314"/>
    <property type="project" value="TAIR"/>
</dbReference>
<dbReference type="GO" id="GO:0008270">
    <property type="term" value="F:zinc ion binding"/>
    <property type="evidence" value="ECO:0007005"/>
    <property type="project" value="TAIR"/>
</dbReference>
<dbReference type="GO" id="GO:0019344">
    <property type="term" value="P:cysteine biosynthetic process"/>
    <property type="evidence" value="ECO:0000315"/>
    <property type="project" value="TAIR"/>
</dbReference>
<dbReference type="GO" id="GO:0006535">
    <property type="term" value="P:cysteine biosynthetic process from serine"/>
    <property type="evidence" value="ECO:0007669"/>
    <property type="project" value="InterPro"/>
</dbReference>
<dbReference type="CDD" id="cd03354">
    <property type="entry name" value="LbH_SAT"/>
    <property type="match status" value="1"/>
</dbReference>
<dbReference type="FunFam" id="2.160.10.10:FF:000002">
    <property type="entry name" value="Serine acetyltransferase"/>
    <property type="match status" value="1"/>
</dbReference>
<dbReference type="FunFam" id="1.10.3130.10:FF:000007">
    <property type="entry name" value="serine acetyltransferase 1, chloroplastic"/>
    <property type="match status" value="1"/>
</dbReference>
<dbReference type="Gene3D" id="2.160.10.10">
    <property type="entry name" value="Hexapeptide repeat proteins"/>
    <property type="match status" value="1"/>
</dbReference>
<dbReference type="Gene3D" id="1.10.3130.10">
    <property type="entry name" value="serine acetyltransferase, domain 1"/>
    <property type="match status" value="1"/>
</dbReference>
<dbReference type="InterPro" id="IPR001451">
    <property type="entry name" value="Hexapep"/>
</dbReference>
<dbReference type="InterPro" id="IPR018357">
    <property type="entry name" value="Hexapep_transf_CS"/>
</dbReference>
<dbReference type="InterPro" id="IPR045304">
    <property type="entry name" value="LbH_SAT"/>
</dbReference>
<dbReference type="InterPro" id="IPR010493">
    <property type="entry name" value="Ser_AcTrfase_N"/>
</dbReference>
<dbReference type="InterPro" id="IPR042122">
    <property type="entry name" value="Ser_AcTrfase_N_sf"/>
</dbReference>
<dbReference type="InterPro" id="IPR005881">
    <property type="entry name" value="Ser_O-AcTrfase"/>
</dbReference>
<dbReference type="InterPro" id="IPR053376">
    <property type="entry name" value="Serine_acetyltransferase"/>
</dbReference>
<dbReference type="InterPro" id="IPR011004">
    <property type="entry name" value="Trimer_LpxA-like_sf"/>
</dbReference>
<dbReference type="NCBIfam" id="TIGR01172">
    <property type="entry name" value="cysE"/>
    <property type="match status" value="1"/>
</dbReference>
<dbReference type="NCBIfam" id="NF041874">
    <property type="entry name" value="EPS_EpsC"/>
    <property type="match status" value="1"/>
</dbReference>
<dbReference type="PANTHER" id="PTHR42811">
    <property type="entry name" value="SERINE ACETYLTRANSFERASE"/>
    <property type="match status" value="1"/>
</dbReference>
<dbReference type="Pfam" id="PF00132">
    <property type="entry name" value="Hexapep"/>
    <property type="match status" value="1"/>
</dbReference>
<dbReference type="Pfam" id="PF06426">
    <property type="entry name" value="SATase_N"/>
    <property type="match status" value="1"/>
</dbReference>
<dbReference type="SMART" id="SM00971">
    <property type="entry name" value="SATase_N"/>
    <property type="match status" value="1"/>
</dbReference>
<dbReference type="SUPFAM" id="SSF51161">
    <property type="entry name" value="Trimeric LpxA-like enzymes"/>
    <property type="match status" value="1"/>
</dbReference>
<dbReference type="PROSITE" id="PS00101">
    <property type="entry name" value="HEXAPEP_TRANSFERASES"/>
    <property type="match status" value="1"/>
</dbReference>
<name>SAT3_ARATH</name>
<organism>
    <name type="scientific">Arabidopsis thaliana</name>
    <name type="common">Mouse-ear cress</name>
    <dbReference type="NCBI Taxonomy" id="3702"/>
    <lineage>
        <taxon>Eukaryota</taxon>
        <taxon>Viridiplantae</taxon>
        <taxon>Streptophyta</taxon>
        <taxon>Embryophyta</taxon>
        <taxon>Tracheophyta</taxon>
        <taxon>Spermatophyta</taxon>
        <taxon>Magnoliopsida</taxon>
        <taxon>eudicotyledons</taxon>
        <taxon>Gunneridae</taxon>
        <taxon>Pentapetalae</taxon>
        <taxon>rosids</taxon>
        <taxon>malvids</taxon>
        <taxon>Brassicales</taxon>
        <taxon>Brassicaceae</taxon>
        <taxon>Camelineae</taxon>
        <taxon>Arabidopsis</taxon>
    </lineage>
</organism>
<keyword id="KW-0012">Acyltransferase</keyword>
<keyword id="KW-0028">Amino-acid biosynthesis</keyword>
<keyword id="KW-0496">Mitochondrion</keyword>
<keyword id="KW-1185">Reference proteome</keyword>
<keyword id="KW-0808">Transferase</keyword>
<keyword id="KW-0809">Transit peptide</keyword>
<protein>
    <recommendedName>
        <fullName>Serine acetyltransferase 3, mitochondrial</fullName>
        <shortName>AtSAT-3</shortName>
        <shortName>AtSERAT2;2</shortName>
        <shortName>SAT-m</shortName>
        <ecNumber>2.3.1.30</ecNumber>
    </recommendedName>
</protein>
<proteinExistence type="evidence at protein level"/>